<reference key="1">
    <citation type="journal article" date="2006" name="J. Bacteriol.">
        <title>Pathogenomic sequence analysis of Bacillus cereus and Bacillus thuringiensis isolates closely related to Bacillus anthracis.</title>
        <authorList>
            <person name="Han C.S."/>
            <person name="Xie G."/>
            <person name="Challacombe J.F."/>
            <person name="Altherr M.R."/>
            <person name="Bhotika S.S."/>
            <person name="Bruce D."/>
            <person name="Campbell C.S."/>
            <person name="Campbell M.L."/>
            <person name="Chen J."/>
            <person name="Chertkov O."/>
            <person name="Cleland C."/>
            <person name="Dimitrijevic M."/>
            <person name="Doggett N.A."/>
            <person name="Fawcett J.J."/>
            <person name="Glavina T."/>
            <person name="Goodwin L.A."/>
            <person name="Hill K.K."/>
            <person name="Hitchcock P."/>
            <person name="Jackson P.J."/>
            <person name="Keim P."/>
            <person name="Kewalramani A.R."/>
            <person name="Longmire J."/>
            <person name="Lucas S."/>
            <person name="Malfatti S."/>
            <person name="McMurry K."/>
            <person name="Meincke L.J."/>
            <person name="Misra M."/>
            <person name="Moseman B.L."/>
            <person name="Mundt M."/>
            <person name="Munk A.C."/>
            <person name="Okinaka R.T."/>
            <person name="Parson-Quintana B."/>
            <person name="Reilly L.P."/>
            <person name="Richardson P."/>
            <person name="Robinson D.L."/>
            <person name="Rubin E."/>
            <person name="Saunders E."/>
            <person name="Tapia R."/>
            <person name="Tesmer J.G."/>
            <person name="Thayer N."/>
            <person name="Thompson L.S."/>
            <person name="Tice H."/>
            <person name="Ticknor L.O."/>
            <person name="Wills P.L."/>
            <person name="Brettin T.S."/>
            <person name="Gilna P."/>
        </authorList>
    </citation>
    <scope>NUCLEOTIDE SEQUENCE [LARGE SCALE GENOMIC DNA]</scope>
    <source>
        <strain>ZK / E33L</strain>
    </source>
</reference>
<protein>
    <recommendedName>
        <fullName evidence="1">Large ribosomal subunit protein uL5</fullName>
    </recommendedName>
    <alternativeName>
        <fullName evidence="2">50S ribosomal protein L5</fullName>
    </alternativeName>
</protein>
<keyword id="KW-0687">Ribonucleoprotein</keyword>
<keyword id="KW-0689">Ribosomal protein</keyword>
<keyword id="KW-0694">RNA-binding</keyword>
<keyword id="KW-0699">rRNA-binding</keyword>
<keyword id="KW-0820">tRNA-binding</keyword>
<gene>
    <name evidence="1" type="primary">rplE</name>
    <name type="ordered locus">BCE33L0116</name>
</gene>
<name>RL5_BACCZ</name>
<sequence>MNRLKEKFQKEITPALVSKFNYKSVMQVPKIEKIVINTGVGDAVSNSKALDNAVEELTQITGQKPVVTRAKKSIAGFRLREGMPIGAKVTLRGEQMYEFFDKLVSVSLPRVRDFRGVSKKSFDGRGNYTLGVKEQLIFPEIDYDKVSKVRGMDIVIVTTAKTDEEARELLTQFGMPFQK</sequence>
<comment type="function">
    <text evidence="1">This is one of the proteins that bind and probably mediate the attachment of the 5S RNA into the large ribosomal subunit, where it forms part of the central protuberance. In the 70S ribosome it contacts protein S13 of the 30S subunit (bridge B1b), connecting the 2 subunits; this bridge is implicated in subunit movement. Contacts the P site tRNA; the 5S rRNA and some of its associated proteins might help stabilize positioning of ribosome-bound tRNAs.</text>
</comment>
<comment type="subunit">
    <text evidence="1">Part of the 50S ribosomal subunit; part of the 5S rRNA/L5/L18/L25 subcomplex. Contacts the 5S rRNA and the P site tRNA. Forms a bridge to the 30S subunit in the 70S ribosome.</text>
</comment>
<comment type="similarity">
    <text evidence="1">Belongs to the universal ribosomal protein uL5 family.</text>
</comment>
<evidence type="ECO:0000255" key="1">
    <source>
        <dbReference type="HAMAP-Rule" id="MF_01333"/>
    </source>
</evidence>
<evidence type="ECO:0000305" key="2"/>
<accession>Q63H78</accession>
<feature type="chain" id="PRO_0000242965" description="Large ribosomal subunit protein uL5">
    <location>
        <begin position="1"/>
        <end position="179"/>
    </location>
</feature>
<proteinExistence type="inferred from homology"/>
<organism>
    <name type="scientific">Bacillus cereus (strain ZK / E33L)</name>
    <dbReference type="NCBI Taxonomy" id="288681"/>
    <lineage>
        <taxon>Bacteria</taxon>
        <taxon>Bacillati</taxon>
        <taxon>Bacillota</taxon>
        <taxon>Bacilli</taxon>
        <taxon>Bacillales</taxon>
        <taxon>Bacillaceae</taxon>
        <taxon>Bacillus</taxon>
        <taxon>Bacillus cereus group</taxon>
    </lineage>
</organism>
<dbReference type="EMBL" id="CP000001">
    <property type="protein sequence ID" value="AAU20113.1"/>
    <property type="molecule type" value="Genomic_DNA"/>
</dbReference>
<dbReference type="RefSeq" id="WP_001080831.1">
    <property type="nucleotide sequence ID" value="NZ_CP009968.1"/>
</dbReference>
<dbReference type="SMR" id="Q63H78"/>
<dbReference type="GeneID" id="93010931"/>
<dbReference type="KEGG" id="bcz:BCE33L0116"/>
<dbReference type="PATRIC" id="fig|288681.22.peg.35"/>
<dbReference type="Proteomes" id="UP000002612">
    <property type="component" value="Chromosome"/>
</dbReference>
<dbReference type="GO" id="GO:1990904">
    <property type="term" value="C:ribonucleoprotein complex"/>
    <property type="evidence" value="ECO:0007669"/>
    <property type="project" value="UniProtKB-KW"/>
</dbReference>
<dbReference type="GO" id="GO:0005840">
    <property type="term" value="C:ribosome"/>
    <property type="evidence" value="ECO:0007669"/>
    <property type="project" value="UniProtKB-KW"/>
</dbReference>
<dbReference type="GO" id="GO:0019843">
    <property type="term" value="F:rRNA binding"/>
    <property type="evidence" value="ECO:0007669"/>
    <property type="project" value="UniProtKB-UniRule"/>
</dbReference>
<dbReference type="GO" id="GO:0003735">
    <property type="term" value="F:structural constituent of ribosome"/>
    <property type="evidence" value="ECO:0007669"/>
    <property type="project" value="InterPro"/>
</dbReference>
<dbReference type="GO" id="GO:0000049">
    <property type="term" value="F:tRNA binding"/>
    <property type="evidence" value="ECO:0007669"/>
    <property type="project" value="UniProtKB-UniRule"/>
</dbReference>
<dbReference type="GO" id="GO:0006412">
    <property type="term" value="P:translation"/>
    <property type="evidence" value="ECO:0007669"/>
    <property type="project" value="UniProtKB-UniRule"/>
</dbReference>
<dbReference type="FunFam" id="3.30.1440.10:FF:000001">
    <property type="entry name" value="50S ribosomal protein L5"/>
    <property type="match status" value="1"/>
</dbReference>
<dbReference type="Gene3D" id="3.30.1440.10">
    <property type="match status" value="1"/>
</dbReference>
<dbReference type="HAMAP" id="MF_01333_B">
    <property type="entry name" value="Ribosomal_uL5_B"/>
    <property type="match status" value="1"/>
</dbReference>
<dbReference type="InterPro" id="IPR002132">
    <property type="entry name" value="Ribosomal_uL5"/>
</dbReference>
<dbReference type="InterPro" id="IPR020930">
    <property type="entry name" value="Ribosomal_uL5_bac-type"/>
</dbReference>
<dbReference type="InterPro" id="IPR031309">
    <property type="entry name" value="Ribosomal_uL5_C"/>
</dbReference>
<dbReference type="InterPro" id="IPR020929">
    <property type="entry name" value="Ribosomal_uL5_CS"/>
</dbReference>
<dbReference type="InterPro" id="IPR022803">
    <property type="entry name" value="Ribosomal_uL5_dom_sf"/>
</dbReference>
<dbReference type="InterPro" id="IPR031310">
    <property type="entry name" value="Ribosomal_uL5_N"/>
</dbReference>
<dbReference type="NCBIfam" id="NF000585">
    <property type="entry name" value="PRK00010.1"/>
    <property type="match status" value="1"/>
</dbReference>
<dbReference type="PANTHER" id="PTHR11994">
    <property type="entry name" value="60S RIBOSOMAL PROTEIN L11-RELATED"/>
    <property type="match status" value="1"/>
</dbReference>
<dbReference type="Pfam" id="PF00281">
    <property type="entry name" value="Ribosomal_L5"/>
    <property type="match status" value="1"/>
</dbReference>
<dbReference type="Pfam" id="PF00673">
    <property type="entry name" value="Ribosomal_L5_C"/>
    <property type="match status" value="1"/>
</dbReference>
<dbReference type="PIRSF" id="PIRSF002161">
    <property type="entry name" value="Ribosomal_L5"/>
    <property type="match status" value="1"/>
</dbReference>
<dbReference type="SUPFAM" id="SSF55282">
    <property type="entry name" value="RL5-like"/>
    <property type="match status" value="1"/>
</dbReference>
<dbReference type="PROSITE" id="PS00358">
    <property type="entry name" value="RIBOSOMAL_L5"/>
    <property type="match status" value="1"/>
</dbReference>